<protein>
    <recommendedName>
        <fullName evidence="1">Isoleucine--tRNA ligase</fullName>
        <ecNumber evidence="1">6.1.1.5</ecNumber>
    </recommendedName>
    <alternativeName>
        <fullName evidence="1">Isoleucyl-tRNA synthetase</fullName>
        <shortName evidence="1">IleRS</shortName>
    </alternativeName>
</protein>
<accession>Q3SHS3</accession>
<reference key="1">
    <citation type="journal article" date="2006" name="J. Bacteriol.">
        <title>The genome sequence of the obligately chemolithoautotrophic, facultatively anaerobic bacterium Thiobacillus denitrificans.</title>
        <authorList>
            <person name="Beller H.R."/>
            <person name="Chain P.S."/>
            <person name="Letain T.E."/>
            <person name="Chakicherla A."/>
            <person name="Larimer F.W."/>
            <person name="Richardson P.M."/>
            <person name="Coleman M.A."/>
            <person name="Wood A.P."/>
            <person name="Kelly D.P."/>
        </authorList>
    </citation>
    <scope>NUCLEOTIDE SEQUENCE [LARGE SCALE GENOMIC DNA]</scope>
    <source>
        <strain>ATCC 25259 / T1</strain>
    </source>
</reference>
<name>SYI_THIDA</name>
<feature type="chain" id="PRO_0000098495" description="Isoleucine--tRNA ligase">
    <location>
        <begin position="1"/>
        <end position="929"/>
    </location>
</feature>
<feature type="short sequence motif" description="'HIGH' region">
    <location>
        <begin position="58"/>
        <end position="68"/>
    </location>
</feature>
<feature type="short sequence motif" description="'KMSKS' region">
    <location>
        <begin position="609"/>
        <end position="613"/>
    </location>
</feature>
<feature type="binding site" evidence="1">
    <location>
        <position position="568"/>
    </location>
    <ligand>
        <name>L-isoleucyl-5'-AMP</name>
        <dbReference type="ChEBI" id="CHEBI:178002"/>
    </ligand>
</feature>
<feature type="binding site" evidence="1">
    <location>
        <position position="612"/>
    </location>
    <ligand>
        <name>ATP</name>
        <dbReference type="ChEBI" id="CHEBI:30616"/>
    </ligand>
</feature>
<feature type="binding site" evidence="1">
    <location>
        <position position="892"/>
    </location>
    <ligand>
        <name>Zn(2+)</name>
        <dbReference type="ChEBI" id="CHEBI:29105"/>
    </ligand>
</feature>
<feature type="binding site" evidence="1">
    <location>
        <position position="895"/>
    </location>
    <ligand>
        <name>Zn(2+)</name>
        <dbReference type="ChEBI" id="CHEBI:29105"/>
    </ligand>
</feature>
<feature type="binding site" evidence="1">
    <location>
        <position position="912"/>
    </location>
    <ligand>
        <name>Zn(2+)</name>
        <dbReference type="ChEBI" id="CHEBI:29105"/>
    </ligand>
</feature>
<feature type="binding site" evidence="1">
    <location>
        <position position="915"/>
    </location>
    <ligand>
        <name>Zn(2+)</name>
        <dbReference type="ChEBI" id="CHEBI:29105"/>
    </ligand>
</feature>
<comment type="function">
    <text evidence="1">Catalyzes the attachment of isoleucine to tRNA(Ile). As IleRS can inadvertently accommodate and process structurally similar amino acids such as valine, to avoid such errors it has two additional distinct tRNA(Ile)-dependent editing activities. One activity is designated as 'pretransfer' editing and involves the hydrolysis of activated Val-AMP. The other activity is designated 'posttransfer' editing and involves deacylation of mischarged Val-tRNA(Ile).</text>
</comment>
<comment type="catalytic activity">
    <reaction evidence="1">
        <text>tRNA(Ile) + L-isoleucine + ATP = L-isoleucyl-tRNA(Ile) + AMP + diphosphate</text>
        <dbReference type="Rhea" id="RHEA:11060"/>
        <dbReference type="Rhea" id="RHEA-COMP:9666"/>
        <dbReference type="Rhea" id="RHEA-COMP:9695"/>
        <dbReference type="ChEBI" id="CHEBI:30616"/>
        <dbReference type="ChEBI" id="CHEBI:33019"/>
        <dbReference type="ChEBI" id="CHEBI:58045"/>
        <dbReference type="ChEBI" id="CHEBI:78442"/>
        <dbReference type="ChEBI" id="CHEBI:78528"/>
        <dbReference type="ChEBI" id="CHEBI:456215"/>
        <dbReference type="EC" id="6.1.1.5"/>
    </reaction>
</comment>
<comment type="cofactor">
    <cofactor evidence="1">
        <name>Zn(2+)</name>
        <dbReference type="ChEBI" id="CHEBI:29105"/>
    </cofactor>
    <text evidence="1">Binds 1 zinc ion per subunit.</text>
</comment>
<comment type="subunit">
    <text evidence="1">Monomer.</text>
</comment>
<comment type="subcellular location">
    <subcellularLocation>
        <location evidence="1">Cytoplasm</location>
    </subcellularLocation>
</comment>
<comment type="domain">
    <text evidence="1">IleRS has two distinct active sites: one for aminoacylation and one for editing. The misactivated valine is translocated from the active site to the editing site, which sterically excludes the correctly activated isoleucine. The single editing site contains two valyl binding pockets, one specific for each substrate (Val-AMP or Val-tRNA(Ile)).</text>
</comment>
<comment type="similarity">
    <text evidence="1">Belongs to the class-I aminoacyl-tRNA synthetase family. IleS type 1 subfamily.</text>
</comment>
<organism>
    <name type="scientific">Thiobacillus denitrificans (strain ATCC 25259 / T1)</name>
    <dbReference type="NCBI Taxonomy" id="292415"/>
    <lineage>
        <taxon>Bacteria</taxon>
        <taxon>Pseudomonadati</taxon>
        <taxon>Pseudomonadota</taxon>
        <taxon>Betaproteobacteria</taxon>
        <taxon>Nitrosomonadales</taxon>
        <taxon>Thiobacillaceae</taxon>
        <taxon>Thiobacillus</taxon>
    </lineage>
</organism>
<gene>
    <name evidence="1" type="primary">ileS</name>
    <name type="ordered locus">Tbd_1857</name>
</gene>
<sequence length="929" mass="103660">MPDYKSTLNLPDTPFPMRGDLAKREPGWVKSWQEKKRYEAIRAAAAGRPKFILHDGPPYANGDIHIGHAVNKILKDIIVKAKTLSGFDAPYVPGWDCHGLPIELQVEKTHGKDIPPAKFRELCRAYAAEQIERQKADFIRLGVLGDWSNPYRTMDFQFEADTLRVLGQIQQAGFLYQGAKPVHWCVDCGSALAEAEVEYEDKNSPAIDVGFAVADRADLARRFDVAAIDTPVQIVIWTTTPWTLPANQAVALHPDFPYTLVRTARGLLVLAESLREAALVRYGLADGAEILAHTTGQMLEGLPLWHPFQDRQVPVIVGEHVTADAGTGAVHTAPGHGLDDYVVGSRYGLKVDNPVGDDGRFYASVPLVGGMSIWQANPLIVETLEASGALLAHEKLLHSYPHCWRHKTPIIFRATRQWFIGMDSAGQDSGVRDQGATLREQAMKAVEATQFFPHWGRARLEAMIRNRPDWCVSRQRNWGVPMPFFTHRETGALHPRTTELLEIVAQRVETAGIEAWFALDPAELLGDDAAHYDKTGHTLDVWFDSGVTHACVLKRRSELAHPADLYLEGSDQHRGWFQSSLLTGCATDGRAPYDALLTHGFVVDGKGHKMSKSKGNVIAPQKVMDQYGADILRLWVATTDYSGELSISDEILKRVVEGYRRIRNTLKFLLANLSDFDPREHAMSVDEWLEIDRYALAMTRRLQGELQRHYDAYEFHFIVQKLQSFCSEDLGGFYLDILKDRLYTSAGDSRARRAAQNALHHLTHALVRWMAPILSFTGEEVWTQLADADDSVFLHTRHVLPEQGGEDELLERWARIRALRAEVQKELETVRVAGAIGSSLQAEVTLHATPSTAALLSSLADDLRFVLITSQARVVGADADRVEVAPSAAKKCDRCWHYRDDVDAHPEHPGLCGRCVSNLFGDGEARRHA</sequence>
<evidence type="ECO:0000255" key="1">
    <source>
        <dbReference type="HAMAP-Rule" id="MF_02002"/>
    </source>
</evidence>
<keyword id="KW-0030">Aminoacyl-tRNA synthetase</keyword>
<keyword id="KW-0067">ATP-binding</keyword>
<keyword id="KW-0963">Cytoplasm</keyword>
<keyword id="KW-0436">Ligase</keyword>
<keyword id="KW-0479">Metal-binding</keyword>
<keyword id="KW-0547">Nucleotide-binding</keyword>
<keyword id="KW-0648">Protein biosynthesis</keyword>
<keyword id="KW-1185">Reference proteome</keyword>
<keyword id="KW-0862">Zinc</keyword>
<proteinExistence type="inferred from homology"/>
<dbReference type="EC" id="6.1.1.5" evidence="1"/>
<dbReference type="EMBL" id="CP000116">
    <property type="protein sequence ID" value="AAZ97810.1"/>
    <property type="molecule type" value="Genomic_DNA"/>
</dbReference>
<dbReference type="RefSeq" id="WP_011312369.1">
    <property type="nucleotide sequence ID" value="NC_007404.1"/>
</dbReference>
<dbReference type="SMR" id="Q3SHS3"/>
<dbReference type="STRING" id="292415.Tbd_1857"/>
<dbReference type="KEGG" id="tbd:Tbd_1857"/>
<dbReference type="eggNOG" id="COG0060">
    <property type="taxonomic scope" value="Bacteria"/>
</dbReference>
<dbReference type="HOGENOM" id="CLU_001493_7_1_4"/>
<dbReference type="OrthoDB" id="9810365at2"/>
<dbReference type="Proteomes" id="UP000008291">
    <property type="component" value="Chromosome"/>
</dbReference>
<dbReference type="GO" id="GO:0005829">
    <property type="term" value="C:cytosol"/>
    <property type="evidence" value="ECO:0007669"/>
    <property type="project" value="TreeGrafter"/>
</dbReference>
<dbReference type="GO" id="GO:0002161">
    <property type="term" value="F:aminoacyl-tRNA deacylase activity"/>
    <property type="evidence" value="ECO:0007669"/>
    <property type="project" value="InterPro"/>
</dbReference>
<dbReference type="GO" id="GO:0005524">
    <property type="term" value="F:ATP binding"/>
    <property type="evidence" value="ECO:0007669"/>
    <property type="project" value="UniProtKB-UniRule"/>
</dbReference>
<dbReference type="GO" id="GO:0004822">
    <property type="term" value="F:isoleucine-tRNA ligase activity"/>
    <property type="evidence" value="ECO:0007669"/>
    <property type="project" value="UniProtKB-UniRule"/>
</dbReference>
<dbReference type="GO" id="GO:0000049">
    <property type="term" value="F:tRNA binding"/>
    <property type="evidence" value="ECO:0007669"/>
    <property type="project" value="InterPro"/>
</dbReference>
<dbReference type="GO" id="GO:0008270">
    <property type="term" value="F:zinc ion binding"/>
    <property type="evidence" value="ECO:0007669"/>
    <property type="project" value="UniProtKB-UniRule"/>
</dbReference>
<dbReference type="GO" id="GO:0006428">
    <property type="term" value="P:isoleucyl-tRNA aminoacylation"/>
    <property type="evidence" value="ECO:0007669"/>
    <property type="project" value="UniProtKB-UniRule"/>
</dbReference>
<dbReference type="CDD" id="cd07960">
    <property type="entry name" value="Anticodon_Ia_Ile_BEm"/>
    <property type="match status" value="1"/>
</dbReference>
<dbReference type="FunFam" id="3.40.50.620:FF:000042">
    <property type="entry name" value="Isoleucine--tRNA ligase"/>
    <property type="match status" value="1"/>
</dbReference>
<dbReference type="FunFam" id="3.40.50.620:FF:000048">
    <property type="entry name" value="Isoleucine--tRNA ligase"/>
    <property type="match status" value="1"/>
</dbReference>
<dbReference type="Gene3D" id="1.10.730.20">
    <property type="match status" value="1"/>
</dbReference>
<dbReference type="Gene3D" id="3.40.50.620">
    <property type="entry name" value="HUPs"/>
    <property type="match status" value="2"/>
</dbReference>
<dbReference type="Gene3D" id="3.90.740.10">
    <property type="entry name" value="Valyl/Leucyl/Isoleucyl-tRNA synthetase, editing domain"/>
    <property type="match status" value="1"/>
</dbReference>
<dbReference type="HAMAP" id="MF_02002">
    <property type="entry name" value="Ile_tRNA_synth_type1"/>
    <property type="match status" value="1"/>
</dbReference>
<dbReference type="InterPro" id="IPR001412">
    <property type="entry name" value="aa-tRNA-synth_I_CS"/>
</dbReference>
<dbReference type="InterPro" id="IPR002300">
    <property type="entry name" value="aa-tRNA-synth_Ia"/>
</dbReference>
<dbReference type="InterPro" id="IPR033708">
    <property type="entry name" value="Anticodon_Ile_BEm"/>
</dbReference>
<dbReference type="InterPro" id="IPR002301">
    <property type="entry name" value="Ile-tRNA-ligase"/>
</dbReference>
<dbReference type="InterPro" id="IPR023585">
    <property type="entry name" value="Ile-tRNA-ligase_type1"/>
</dbReference>
<dbReference type="InterPro" id="IPR050081">
    <property type="entry name" value="Ile-tRNA_ligase"/>
</dbReference>
<dbReference type="InterPro" id="IPR013155">
    <property type="entry name" value="M/V/L/I-tRNA-synth_anticd-bd"/>
</dbReference>
<dbReference type="InterPro" id="IPR014729">
    <property type="entry name" value="Rossmann-like_a/b/a_fold"/>
</dbReference>
<dbReference type="InterPro" id="IPR009080">
    <property type="entry name" value="tRNAsynth_Ia_anticodon-bd"/>
</dbReference>
<dbReference type="InterPro" id="IPR009008">
    <property type="entry name" value="Val/Leu/Ile-tRNA-synth_edit"/>
</dbReference>
<dbReference type="InterPro" id="IPR010663">
    <property type="entry name" value="Znf_FPG/IleRS"/>
</dbReference>
<dbReference type="NCBIfam" id="TIGR00392">
    <property type="entry name" value="ileS"/>
    <property type="match status" value="1"/>
</dbReference>
<dbReference type="PANTHER" id="PTHR42765:SF1">
    <property type="entry name" value="ISOLEUCINE--TRNA LIGASE, MITOCHONDRIAL"/>
    <property type="match status" value="1"/>
</dbReference>
<dbReference type="PANTHER" id="PTHR42765">
    <property type="entry name" value="SOLEUCYL-TRNA SYNTHETASE"/>
    <property type="match status" value="1"/>
</dbReference>
<dbReference type="Pfam" id="PF08264">
    <property type="entry name" value="Anticodon_1"/>
    <property type="match status" value="1"/>
</dbReference>
<dbReference type="Pfam" id="PF00133">
    <property type="entry name" value="tRNA-synt_1"/>
    <property type="match status" value="1"/>
</dbReference>
<dbReference type="Pfam" id="PF06827">
    <property type="entry name" value="zf-FPG_IleRS"/>
    <property type="match status" value="1"/>
</dbReference>
<dbReference type="PRINTS" id="PR00984">
    <property type="entry name" value="TRNASYNTHILE"/>
</dbReference>
<dbReference type="SUPFAM" id="SSF47323">
    <property type="entry name" value="Anticodon-binding domain of a subclass of class I aminoacyl-tRNA synthetases"/>
    <property type="match status" value="1"/>
</dbReference>
<dbReference type="SUPFAM" id="SSF52374">
    <property type="entry name" value="Nucleotidylyl transferase"/>
    <property type="match status" value="1"/>
</dbReference>
<dbReference type="SUPFAM" id="SSF50677">
    <property type="entry name" value="ValRS/IleRS/LeuRS editing domain"/>
    <property type="match status" value="1"/>
</dbReference>
<dbReference type="PROSITE" id="PS00178">
    <property type="entry name" value="AA_TRNA_LIGASE_I"/>
    <property type="match status" value="1"/>
</dbReference>